<keyword id="KW-0963">Cytoplasm</keyword>
<keyword id="KW-0269">Exonuclease</keyword>
<keyword id="KW-0378">Hydrolase</keyword>
<keyword id="KW-0540">Nuclease</keyword>
<reference key="1">
    <citation type="journal article" date="2007" name="J. Bacteriol.">
        <title>The complete genome sequence of Bacillus thuringiensis Al Hakam.</title>
        <authorList>
            <person name="Challacombe J.F."/>
            <person name="Altherr M.R."/>
            <person name="Xie G."/>
            <person name="Bhotika S.S."/>
            <person name="Brown N."/>
            <person name="Bruce D."/>
            <person name="Campbell C.S."/>
            <person name="Campbell M.L."/>
            <person name="Chen J."/>
            <person name="Chertkov O."/>
            <person name="Cleland C."/>
            <person name="Dimitrijevic M."/>
            <person name="Doggett N.A."/>
            <person name="Fawcett J.J."/>
            <person name="Glavina T."/>
            <person name="Goodwin L.A."/>
            <person name="Green L.D."/>
            <person name="Han C.S."/>
            <person name="Hill K.K."/>
            <person name="Hitchcock P."/>
            <person name="Jackson P.J."/>
            <person name="Keim P."/>
            <person name="Kewalramani A.R."/>
            <person name="Longmire J."/>
            <person name="Lucas S."/>
            <person name="Malfatti S."/>
            <person name="Martinez D."/>
            <person name="McMurry K."/>
            <person name="Meincke L.J."/>
            <person name="Misra M."/>
            <person name="Moseman B.L."/>
            <person name="Mundt M."/>
            <person name="Munk A.C."/>
            <person name="Okinaka R.T."/>
            <person name="Parson-Quintana B."/>
            <person name="Reilly L.P."/>
            <person name="Richardson P."/>
            <person name="Robinson D.L."/>
            <person name="Saunders E."/>
            <person name="Tapia R."/>
            <person name="Tesmer J.G."/>
            <person name="Thayer N."/>
            <person name="Thompson L.S."/>
            <person name="Tice H."/>
            <person name="Ticknor L.O."/>
            <person name="Wills P.L."/>
            <person name="Gilna P."/>
            <person name="Brettin T.S."/>
        </authorList>
    </citation>
    <scope>NUCLEOTIDE SEQUENCE [LARGE SCALE GENOMIC DNA]</scope>
    <source>
        <strain>Al Hakam</strain>
    </source>
</reference>
<feature type="chain" id="PRO_0000303775" description="Exodeoxyribonuclease 7 large subunit">
    <location>
        <begin position="1"/>
        <end position="452"/>
    </location>
</feature>
<organism>
    <name type="scientific">Bacillus thuringiensis (strain Al Hakam)</name>
    <dbReference type="NCBI Taxonomy" id="412694"/>
    <lineage>
        <taxon>Bacteria</taxon>
        <taxon>Bacillati</taxon>
        <taxon>Bacillota</taxon>
        <taxon>Bacilli</taxon>
        <taxon>Bacillales</taxon>
        <taxon>Bacillaceae</taxon>
        <taxon>Bacillus</taxon>
        <taxon>Bacillus cereus group</taxon>
    </lineage>
</organism>
<protein>
    <recommendedName>
        <fullName evidence="1">Exodeoxyribonuclease 7 large subunit</fullName>
        <ecNumber evidence="1">3.1.11.6</ecNumber>
    </recommendedName>
    <alternativeName>
        <fullName evidence="1">Exodeoxyribonuclease VII large subunit</fullName>
        <shortName evidence="1">Exonuclease VII large subunit</shortName>
    </alternativeName>
</protein>
<proteinExistence type="inferred from homology"/>
<accession>A0RIH2</accession>
<evidence type="ECO:0000255" key="1">
    <source>
        <dbReference type="HAMAP-Rule" id="MF_00378"/>
    </source>
</evidence>
<dbReference type="EC" id="3.1.11.6" evidence="1"/>
<dbReference type="EMBL" id="CP000485">
    <property type="protein sequence ID" value="ABK87015.1"/>
    <property type="molecule type" value="Genomic_DNA"/>
</dbReference>
<dbReference type="RefSeq" id="WP_000415260.1">
    <property type="nucleotide sequence ID" value="NC_008600.1"/>
</dbReference>
<dbReference type="SMR" id="A0RIH2"/>
<dbReference type="KEGG" id="btl:BALH_3788"/>
<dbReference type="HOGENOM" id="CLU_023625_3_1_9"/>
<dbReference type="GO" id="GO:0005737">
    <property type="term" value="C:cytoplasm"/>
    <property type="evidence" value="ECO:0007669"/>
    <property type="project" value="UniProtKB-SubCell"/>
</dbReference>
<dbReference type="GO" id="GO:0009318">
    <property type="term" value="C:exodeoxyribonuclease VII complex"/>
    <property type="evidence" value="ECO:0007669"/>
    <property type="project" value="InterPro"/>
</dbReference>
<dbReference type="GO" id="GO:0008855">
    <property type="term" value="F:exodeoxyribonuclease VII activity"/>
    <property type="evidence" value="ECO:0007669"/>
    <property type="project" value="UniProtKB-UniRule"/>
</dbReference>
<dbReference type="GO" id="GO:0003676">
    <property type="term" value="F:nucleic acid binding"/>
    <property type="evidence" value="ECO:0007669"/>
    <property type="project" value="InterPro"/>
</dbReference>
<dbReference type="GO" id="GO:0006308">
    <property type="term" value="P:DNA catabolic process"/>
    <property type="evidence" value="ECO:0007669"/>
    <property type="project" value="UniProtKB-UniRule"/>
</dbReference>
<dbReference type="CDD" id="cd04489">
    <property type="entry name" value="ExoVII_LU_OBF"/>
    <property type="match status" value="1"/>
</dbReference>
<dbReference type="HAMAP" id="MF_00378">
    <property type="entry name" value="Exonuc_7_L"/>
    <property type="match status" value="1"/>
</dbReference>
<dbReference type="InterPro" id="IPR003753">
    <property type="entry name" value="Exonuc_VII_L"/>
</dbReference>
<dbReference type="InterPro" id="IPR020579">
    <property type="entry name" value="Exonuc_VII_lsu_C"/>
</dbReference>
<dbReference type="InterPro" id="IPR025824">
    <property type="entry name" value="OB-fold_nuc-bd_dom"/>
</dbReference>
<dbReference type="NCBIfam" id="TIGR00237">
    <property type="entry name" value="xseA"/>
    <property type="match status" value="1"/>
</dbReference>
<dbReference type="PANTHER" id="PTHR30008">
    <property type="entry name" value="EXODEOXYRIBONUCLEASE 7 LARGE SUBUNIT"/>
    <property type="match status" value="1"/>
</dbReference>
<dbReference type="PANTHER" id="PTHR30008:SF0">
    <property type="entry name" value="EXODEOXYRIBONUCLEASE 7 LARGE SUBUNIT"/>
    <property type="match status" value="1"/>
</dbReference>
<dbReference type="Pfam" id="PF02601">
    <property type="entry name" value="Exonuc_VII_L"/>
    <property type="match status" value="1"/>
</dbReference>
<dbReference type="Pfam" id="PF13742">
    <property type="entry name" value="tRNA_anti_2"/>
    <property type="match status" value="1"/>
</dbReference>
<sequence length="452" mass="51455">MEKQYLTVTALTRYIKTKIEYDPHLQSVWLKGEISNFKNHSRGHMYFTLKDENARIAAVMFAGHNRNIKFRPENGMKVLVKGKISVYEASGSYQIYIQDMQPDGIGNLHLAYEQLKVRLEEEGLFSQVYKKTIPPYAKTIGVITSPTGAAIRDIITTIKRRYPIGNVIVFPVLVQGESAAPSIVQAIRTANEMEEIDVLIVGRGGGSIEELWAFNEEMVARAIFKSEIPIISAVGHETDFTIADFVADLRAPTPTAAAELAAPNIIELQEKVLQRTLRLQRAMRELVHKKEEKLQVLQKSYAFRYPRQVYEQKEEQLDRALEQLVLAKERYIDKKVNQLKQLSFYLEKHHPSQKIMQTKVAVETLQKQLQREMQTLLQTKEFAFVRAAQKLEALSPLKVMMRGYGLVYDEEKQVLKSVKDVSLGDAVSVQLQDGILDCSVSGIEERELNNGK</sequence>
<gene>
    <name evidence="1" type="primary">xseA</name>
    <name type="ordered locus">BALH_3788</name>
</gene>
<comment type="function">
    <text evidence="1">Bidirectionally degrades single-stranded DNA into large acid-insoluble oligonucleotides, which are then degraded further into small acid-soluble oligonucleotides.</text>
</comment>
<comment type="catalytic activity">
    <reaction evidence="1">
        <text>Exonucleolytic cleavage in either 5'- to 3'- or 3'- to 5'-direction to yield nucleoside 5'-phosphates.</text>
        <dbReference type="EC" id="3.1.11.6"/>
    </reaction>
</comment>
<comment type="subunit">
    <text evidence="1">Heterooligomer composed of large and small subunits.</text>
</comment>
<comment type="subcellular location">
    <subcellularLocation>
        <location evidence="1">Cytoplasm</location>
    </subcellularLocation>
</comment>
<comment type="similarity">
    <text evidence="1">Belongs to the XseA family.</text>
</comment>
<name>EX7L_BACAH</name>